<evidence type="ECO:0000250" key="1"/>
<evidence type="ECO:0000255" key="2">
    <source>
        <dbReference type="HAMAP-Rule" id="MF_01057"/>
    </source>
</evidence>
<feature type="chain" id="PRO_0000171392" description="tRNA (guanine-N(7)-)-methyltransferase">
    <location>
        <begin position="1"/>
        <end position="214"/>
    </location>
</feature>
<feature type="active site" evidence="1">
    <location>
        <position position="117"/>
    </location>
</feature>
<feature type="binding site" evidence="2">
    <location>
        <position position="43"/>
    </location>
    <ligand>
        <name>S-adenosyl-L-methionine</name>
        <dbReference type="ChEBI" id="CHEBI:59789"/>
    </ligand>
</feature>
<feature type="binding site" evidence="2">
    <location>
        <position position="68"/>
    </location>
    <ligand>
        <name>S-adenosyl-L-methionine</name>
        <dbReference type="ChEBI" id="CHEBI:59789"/>
    </ligand>
</feature>
<feature type="binding site" evidence="2">
    <location>
        <position position="95"/>
    </location>
    <ligand>
        <name>S-adenosyl-L-methionine</name>
        <dbReference type="ChEBI" id="CHEBI:59789"/>
    </ligand>
</feature>
<feature type="binding site" evidence="2">
    <location>
        <position position="117"/>
    </location>
    <ligand>
        <name>S-adenosyl-L-methionine</name>
        <dbReference type="ChEBI" id="CHEBI:59789"/>
    </ligand>
</feature>
<feature type="binding site" evidence="2">
    <location>
        <position position="121"/>
    </location>
    <ligand>
        <name>substrate</name>
    </ligand>
</feature>
<feature type="binding site" evidence="2">
    <location>
        <position position="153"/>
    </location>
    <ligand>
        <name>substrate</name>
    </ligand>
</feature>
<feature type="binding site" evidence="2">
    <location>
        <begin position="190"/>
        <end position="193"/>
    </location>
    <ligand>
        <name>substrate</name>
    </ligand>
</feature>
<reference key="1">
    <citation type="journal article" date="2004" name="Proc. Natl. Acad. Sci. U.S.A.">
        <title>Complete genomes of two clinical Staphylococcus aureus strains: evidence for the rapid evolution of virulence and drug resistance.</title>
        <authorList>
            <person name="Holden M.T.G."/>
            <person name="Feil E.J."/>
            <person name="Lindsay J.A."/>
            <person name="Peacock S.J."/>
            <person name="Day N.P.J."/>
            <person name="Enright M.C."/>
            <person name="Foster T.J."/>
            <person name="Moore C.E."/>
            <person name="Hurst L."/>
            <person name="Atkin R."/>
            <person name="Barron A."/>
            <person name="Bason N."/>
            <person name="Bentley S.D."/>
            <person name="Chillingworth C."/>
            <person name="Chillingworth T."/>
            <person name="Churcher C."/>
            <person name="Clark L."/>
            <person name="Corton C."/>
            <person name="Cronin A."/>
            <person name="Doggett J."/>
            <person name="Dowd L."/>
            <person name="Feltwell T."/>
            <person name="Hance Z."/>
            <person name="Harris B."/>
            <person name="Hauser H."/>
            <person name="Holroyd S."/>
            <person name="Jagels K."/>
            <person name="James K.D."/>
            <person name="Lennard N."/>
            <person name="Line A."/>
            <person name="Mayes R."/>
            <person name="Moule S."/>
            <person name="Mungall K."/>
            <person name="Ormond D."/>
            <person name="Quail M.A."/>
            <person name="Rabbinowitsch E."/>
            <person name="Rutherford K.M."/>
            <person name="Sanders M."/>
            <person name="Sharp S."/>
            <person name="Simmonds M."/>
            <person name="Stevens K."/>
            <person name="Whitehead S."/>
            <person name="Barrell B.G."/>
            <person name="Spratt B.G."/>
            <person name="Parkhill J."/>
        </authorList>
    </citation>
    <scope>NUCLEOTIDE SEQUENCE [LARGE SCALE GENOMIC DNA]</scope>
    <source>
        <strain>MSSA476</strain>
    </source>
</reference>
<gene>
    <name evidence="2" type="primary">trmB</name>
    <name type="ordered locus">SAS1674</name>
</gene>
<keyword id="KW-0489">Methyltransferase</keyword>
<keyword id="KW-0949">S-adenosyl-L-methionine</keyword>
<keyword id="KW-0808">Transferase</keyword>
<keyword id="KW-0819">tRNA processing</keyword>
<protein>
    <recommendedName>
        <fullName evidence="2">tRNA (guanine-N(7)-)-methyltransferase</fullName>
        <ecNumber evidence="2">2.1.1.33</ecNumber>
    </recommendedName>
    <alternativeName>
        <fullName evidence="2">tRNA (guanine(46)-N(7))-methyltransferase</fullName>
    </alternativeName>
    <alternativeName>
        <fullName evidence="2">tRNA(m7G46)-methyltransferase</fullName>
    </alternativeName>
</protein>
<proteinExistence type="inferred from homology"/>
<organism>
    <name type="scientific">Staphylococcus aureus (strain MSSA476)</name>
    <dbReference type="NCBI Taxonomy" id="282459"/>
    <lineage>
        <taxon>Bacteria</taxon>
        <taxon>Bacillati</taxon>
        <taxon>Bacillota</taxon>
        <taxon>Bacilli</taxon>
        <taxon>Bacillales</taxon>
        <taxon>Staphylococcaceae</taxon>
        <taxon>Staphylococcus</taxon>
    </lineage>
</organism>
<name>TRMB_STAAS</name>
<accession>Q6G8H9</accession>
<sequence>MRVRYKPWAEDYLKDHPELVDMDGQHAGKMTEWFDKTQPIHIEIGSGMGQFITTLAAQNPHINYISMEREKSIVYKVLDKVKEMSLTNLKIICNDAIELNEYFKDGEVSRIYLNFSDPWPKNRHAKRRLTYHTFLALYQQILNDEGDLHFKTDNRGLFAYSLESMSQFGMYFTKINLNLHQEDDGSNILTEYEKKFSNKGSRIYRMEAKFHSQK</sequence>
<comment type="function">
    <text evidence="2">Catalyzes the formation of N(7)-methylguanine at position 46 (m7G46) in tRNA.</text>
</comment>
<comment type="catalytic activity">
    <reaction evidence="2">
        <text>guanosine(46) in tRNA + S-adenosyl-L-methionine = N(7)-methylguanosine(46) in tRNA + S-adenosyl-L-homocysteine</text>
        <dbReference type="Rhea" id="RHEA:42708"/>
        <dbReference type="Rhea" id="RHEA-COMP:10188"/>
        <dbReference type="Rhea" id="RHEA-COMP:10189"/>
        <dbReference type="ChEBI" id="CHEBI:57856"/>
        <dbReference type="ChEBI" id="CHEBI:59789"/>
        <dbReference type="ChEBI" id="CHEBI:74269"/>
        <dbReference type="ChEBI" id="CHEBI:74480"/>
        <dbReference type="EC" id="2.1.1.33"/>
    </reaction>
</comment>
<comment type="pathway">
    <text evidence="2">tRNA modification; N(7)-methylguanine-tRNA biosynthesis.</text>
</comment>
<comment type="similarity">
    <text evidence="2">Belongs to the class I-like SAM-binding methyltransferase superfamily. TrmB family.</text>
</comment>
<dbReference type="EC" id="2.1.1.33" evidence="2"/>
<dbReference type="EMBL" id="BX571857">
    <property type="protein sequence ID" value="CAG43477.1"/>
    <property type="molecule type" value="Genomic_DNA"/>
</dbReference>
<dbReference type="RefSeq" id="WP_001266160.1">
    <property type="nucleotide sequence ID" value="NC_002953.3"/>
</dbReference>
<dbReference type="SMR" id="Q6G8H9"/>
<dbReference type="KEGG" id="sas:SAS1674"/>
<dbReference type="HOGENOM" id="CLU_050910_2_1_9"/>
<dbReference type="UniPathway" id="UPA00989"/>
<dbReference type="GO" id="GO:0043527">
    <property type="term" value="C:tRNA methyltransferase complex"/>
    <property type="evidence" value="ECO:0007669"/>
    <property type="project" value="TreeGrafter"/>
</dbReference>
<dbReference type="GO" id="GO:0008176">
    <property type="term" value="F:tRNA (guanine(46)-N7)-methyltransferase activity"/>
    <property type="evidence" value="ECO:0007669"/>
    <property type="project" value="UniProtKB-UniRule"/>
</dbReference>
<dbReference type="FunFam" id="3.40.50.150:FF:000035">
    <property type="entry name" value="tRNA (guanine-N(7)-)-methyltransferase"/>
    <property type="match status" value="1"/>
</dbReference>
<dbReference type="Gene3D" id="3.40.50.150">
    <property type="entry name" value="Vaccinia Virus protein VP39"/>
    <property type="match status" value="1"/>
</dbReference>
<dbReference type="HAMAP" id="MF_01057">
    <property type="entry name" value="tRNA_methyltr_TrmB"/>
    <property type="match status" value="1"/>
</dbReference>
<dbReference type="InterPro" id="IPR029063">
    <property type="entry name" value="SAM-dependent_MTases_sf"/>
</dbReference>
<dbReference type="InterPro" id="IPR003358">
    <property type="entry name" value="tRNA_(Gua-N-7)_MeTrfase_Trmb"/>
</dbReference>
<dbReference type="InterPro" id="IPR055361">
    <property type="entry name" value="tRNA_methyltr_TrmB_bact"/>
</dbReference>
<dbReference type="NCBIfam" id="NF001080">
    <property type="entry name" value="PRK00121.2-2"/>
    <property type="match status" value="1"/>
</dbReference>
<dbReference type="NCBIfam" id="TIGR00091">
    <property type="entry name" value="tRNA (guanosine(46)-N7)-methyltransferase TrmB"/>
    <property type="match status" value="1"/>
</dbReference>
<dbReference type="PANTHER" id="PTHR23417">
    <property type="entry name" value="3-DEOXY-D-MANNO-OCTULOSONIC-ACID TRANSFERASE/TRNA GUANINE-N 7 - -METHYLTRANSFERASE"/>
    <property type="match status" value="1"/>
</dbReference>
<dbReference type="PANTHER" id="PTHR23417:SF14">
    <property type="entry name" value="PENTACOTRIPEPTIDE-REPEAT REGION OF PRORP DOMAIN-CONTAINING PROTEIN"/>
    <property type="match status" value="1"/>
</dbReference>
<dbReference type="Pfam" id="PF02390">
    <property type="entry name" value="Methyltransf_4"/>
    <property type="match status" value="1"/>
</dbReference>
<dbReference type="SUPFAM" id="SSF53335">
    <property type="entry name" value="S-adenosyl-L-methionine-dependent methyltransferases"/>
    <property type="match status" value="1"/>
</dbReference>
<dbReference type="PROSITE" id="PS51625">
    <property type="entry name" value="SAM_MT_TRMB"/>
    <property type="match status" value="1"/>
</dbReference>